<accession>A8W3A8</accession>
<organism>
    <name type="scientific">Cuscuta exaltata</name>
    <name type="common">Tall dodder</name>
    <dbReference type="NCBI Taxonomy" id="476139"/>
    <lineage>
        <taxon>Eukaryota</taxon>
        <taxon>Viridiplantae</taxon>
        <taxon>Streptophyta</taxon>
        <taxon>Embryophyta</taxon>
        <taxon>Tracheophyta</taxon>
        <taxon>Spermatophyta</taxon>
        <taxon>Magnoliopsida</taxon>
        <taxon>eudicotyledons</taxon>
        <taxon>Gunneridae</taxon>
        <taxon>Pentapetalae</taxon>
        <taxon>asterids</taxon>
        <taxon>lamiids</taxon>
        <taxon>Solanales</taxon>
        <taxon>Convolvulaceae</taxon>
        <taxon>Cuscuteae</taxon>
        <taxon>Cuscuta</taxon>
        <taxon>Cuscuta subgen. Monogynella</taxon>
    </lineage>
</organism>
<protein>
    <recommendedName>
        <fullName evidence="1">Photosystem II reaction center protein I</fullName>
        <shortName evidence="1">PSII-I</shortName>
    </recommendedName>
    <alternativeName>
        <fullName evidence="1">PSII 4.8 kDa protein</fullName>
    </alternativeName>
</protein>
<name>PSBI_CUSEX</name>
<evidence type="ECO:0000255" key="1">
    <source>
        <dbReference type="HAMAP-Rule" id="MF_01316"/>
    </source>
</evidence>
<evidence type="ECO:0000305" key="2"/>
<sequence length="36" mass="4301">MFTLKLFVYTVVIFFVSLFIFGFLSNDPRRNPGREE</sequence>
<feature type="chain" id="PRO_0000353224" description="Photosystem II reaction center protein I">
    <location>
        <begin position="1"/>
        <end position="36"/>
    </location>
</feature>
<feature type="transmembrane region" description="Helical" evidence="1">
    <location>
        <begin position="4"/>
        <end position="24"/>
    </location>
</feature>
<geneLocation type="plastid"/>
<proteinExistence type="inferred from homology"/>
<reference key="1">
    <citation type="journal article" date="2007" name="BMC Plant Biol.">
        <title>Complete plastid genome sequences suggest strong selection for retention of photosynthetic genes in the parasitic plant genus Cuscuta.</title>
        <authorList>
            <person name="McNeal J.R."/>
            <person name="Kuehl J.V."/>
            <person name="Boore J.L."/>
            <person name="dePamphilis C.W."/>
        </authorList>
    </citation>
    <scope>NUCLEOTIDE SEQUENCE [LARGE SCALE GENOMIC DNA]</scope>
</reference>
<comment type="function">
    <text evidence="1">One of the components of the core complex of photosystem II (PSII), required for its stability and/or assembly. PSII is a light-driven water:plastoquinone oxidoreductase that uses light energy to abstract electrons from H(2)O, generating O(2) and a proton gradient subsequently used for ATP formation. It consists of a core antenna complex that captures photons, and an electron transfer chain that converts photonic excitation into a charge separation.</text>
</comment>
<comment type="subunit">
    <text evidence="1">PSII is composed of 1 copy each of membrane proteins PsbA, PsbB, PsbC, PsbD, PsbE, PsbF, PsbH, PsbI, PsbJ, PsbK, PsbL, PsbM, PsbT, PsbX, PsbY, PsbZ, Psb30/Ycf12, at least 3 peripheral proteins of the oxygen-evolving complex and a large number of cofactors. It forms dimeric complexes.</text>
</comment>
<comment type="subcellular location">
    <subcellularLocation>
        <location evidence="2">Plastid membrane</location>
        <topology evidence="1">Single-pass membrane protein</topology>
    </subcellularLocation>
</comment>
<comment type="similarity">
    <text evidence="1">Belongs to the PsbI family.</text>
</comment>
<comment type="caution">
    <text evidence="2">Young tissue from this organism is photosynthetic and contains some thylakoids, although the photosynthetic activity does not exceed the light compensation point.</text>
</comment>
<keyword id="KW-0472">Membrane</keyword>
<keyword id="KW-0602">Photosynthesis</keyword>
<keyword id="KW-0604">Photosystem II</keyword>
<keyword id="KW-0934">Plastid</keyword>
<keyword id="KW-0674">Reaction center</keyword>
<keyword id="KW-0812">Transmembrane</keyword>
<keyword id="KW-1133">Transmembrane helix</keyword>
<gene>
    <name evidence="1" type="primary">psbI</name>
</gene>
<dbReference type="EMBL" id="EU189132">
    <property type="protein sequence ID" value="ABW83679.1"/>
    <property type="molecule type" value="Genomic_DNA"/>
</dbReference>
<dbReference type="RefSeq" id="YP_001542515.1">
    <property type="nucleotide sequence ID" value="NC_009963.1"/>
</dbReference>
<dbReference type="SMR" id="A8W3A8"/>
<dbReference type="GeneID" id="5729650"/>
<dbReference type="GO" id="GO:0009539">
    <property type="term" value="C:photosystem II reaction center"/>
    <property type="evidence" value="ECO:0007669"/>
    <property type="project" value="InterPro"/>
</dbReference>
<dbReference type="GO" id="GO:0042170">
    <property type="term" value="C:plastid membrane"/>
    <property type="evidence" value="ECO:0007669"/>
    <property type="project" value="UniProtKB-SubCell"/>
</dbReference>
<dbReference type="GO" id="GO:0042651">
    <property type="term" value="C:thylakoid membrane"/>
    <property type="evidence" value="ECO:0007669"/>
    <property type="project" value="UniProtKB-UniRule"/>
</dbReference>
<dbReference type="GO" id="GO:0015979">
    <property type="term" value="P:photosynthesis"/>
    <property type="evidence" value="ECO:0007669"/>
    <property type="project" value="UniProtKB-UniRule"/>
</dbReference>
<dbReference type="HAMAP" id="MF_01316">
    <property type="entry name" value="PSII_PsbI"/>
    <property type="match status" value="1"/>
</dbReference>
<dbReference type="InterPro" id="IPR003686">
    <property type="entry name" value="PSII_PsbI"/>
</dbReference>
<dbReference type="InterPro" id="IPR037271">
    <property type="entry name" value="PSII_PsbI_sf"/>
</dbReference>
<dbReference type="PANTHER" id="PTHR35772">
    <property type="entry name" value="PHOTOSYSTEM II REACTION CENTER PROTEIN I"/>
    <property type="match status" value="1"/>
</dbReference>
<dbReference type="PANTHER" id="PTHR35772:SF1">
    <property type="entry name" value="PHOTOSYSTEM II REACTION CENTER PROTEIN I"/>
    <property type="match status" value="1"/>
</dbReference>
<dbReference type="Pfam" id="PF02532">
    <property type="entry name" value="PsbI"/>
    <property type="match status" value="1"/>
</dbReference>
<dbReference type="SUPFAM" id="SSF161041">
    <property type="entry name" value="Photosystem II reaction center protein I, PsbI"/>
    <property type="match status" value="1"/>
</dbReference>